<organismHost>
    <name type="scientific">Bos taurus</name>
    <name type="common">Bovine</name>
    <dbReference type="NCBI Taxonomy" id="9913"/>
</organismHost>
<dbReference type="EMBL" id="U00735">
    <property type="protein sequence ID" value="AAA42914.1"/>
    <property type="molecule type" value="Genomic_RNA"/>
</dbReference>
<dbReference type="PIR" id="D46346">
    <property type="entry name" value="D46346"/>
</dbReference>
<dbReference type="Proteomes" id="UP000007554">
    <property type="component" value="Genome"/>
</dbReference>
<dbReference type="GO" id="GO:0044178">
    <property type="term" value="C:host cell Golgi membrane"/>
    <property type="evidence" value="ECO:0007669"/>
    <property type="project" value="UniProtKB-SubCell"/>
</dbReference>
<dbReference type="GO" id="GO:0016020">
    <property type="term" value="C:membrane"/>
    <property type="evidence" value="ECO:0007669"/>
    <property type="project" value="UniProtKB-UniRule"/>
</dbReference>
<dbReference type="GO" id="GO:0140975">
    <property type="term" value="P:disruption of cellular anatomical structure in another organism"/>
    <property type="evidence" value="ECO:0007669"/>
    <property type="project" value="UniProtKB-UniRule"/>
</dbReference>
<dbReference type="GO" id="GO:0046760">
    <property type="term" value="P:viral budding from Golgi membrane"/>
    <property type="evidence" value="ECO:0007669"/>
    <property type="project" value="UniProtKB-UniRule"/>
</dbReference>
<dbReference type="CDD" id="cd21532">
    <property type="entry name" value="HKU1-CoV-like_E"/>
    <property type="match status" value="1"/>
</dbReference>
<dbReference type="HAMAP" id="MF_04204">
    <property type="entry name" value="BETA_CORONA_E"/>
    <property type="match status" value="1"/>
</dbReference>
<dbReference type="InterPro" id="IPR043506">
    <property type="entry name" value="E_protein_bCoV"/>
</dbReference>
<dbReference type="InterPro" id="IPR003873">
    <property type="entry name" value="E_protein_CoV"/>
</dbReference>
<dbReference type="Pfam" id="PF02723">
    <property type="entry name" value="CoV_E"/>
    <property type="match status" value="1"/>
</dbReference>
<dbReference type="PROSITE" id="PS51926">
    <property type="entry name" value="COV_E"/>
    <property type="match status" value="1"/>
</dbReference>
<comment type="function">
    <text evidence="1">Plays a central role in virus morphogenesis and assembly. Acts as a viroporin and self-assembles in host membranes forming pentameric protein-lipid pores that allow ion transport. Also plays a role in the induction of apoptosis.</text>
</comment>
<comment type="subunit">
    <text evidence="1">Homopentamer. Interacts with membrane protein M in the budding compartment of the host cell, which is located between endoplasmic reticulum and the Golgi complex. Interacts with Nucleoprotein.</text>
</comment>
<comment type="subcellular location">
    <subcellularLocation>
        <location evidence="1">Host Golgi apparatus membrane</location>
        <topology evidence="1">Single-pass type III membrane protein</topology>
    </subcellularLocation>
    <text evidence="1">The cytoplasmic tail functions as a Golgi complex-targeting signal.</text>
</comment>
<comment type="similarity">
    <text evidence="1">Belongs to the betacoronaviruses E protein family.</text>
</comment>
<reference key="1">
    <citation type="journal article" date="1990" name="Virology">
        <title>Sequence and expression analysis of potential nonstructural proteins of 4.9, 4.8, 12.7, and 9.5 kDa encoded between the spike and membrane protein genes of the bovine coronavirus.</title>
        <authorList>
            <person name="Abraham S."/>
            <person name="Kienzle T.E."/>
            <person name="Lapps W.E."/>
            <person name="Brian D.A."/>
        </authorList>
    </citation>
    <scope>NUCLEOTIDE SEQUENCE [GENOMIC RNA]</scope>
</reference>
<proteinExistence type="inferred from homology"/>
<protein>
    <recommendedName>
        <fullName evidence="1">Envelope small membrane protein</fullName>
        <shortName evidence="1">E protein</shortName>
        <shortName evidence="1">sM protein</shortName>
    </recommendedName>
</protein>
<keyword id="KW-0053">Apoptosis</keyword>
<keyword id="KW-1040">Host Golgi apparatus</keyword>
<keyword id="KW-1043">Host membrane</keyword>
<keyword id="KW-0472">Membrane</keyword>
<keyword id="KW-0812">Transmembrane</keyword>
<keyword id="KW-1133">Transmembrane helix</keyword>
<gene>
    <name evidence="1" type="primary">E</name>
    <name type="synonym">sM</name>
    <name type="ORF">5b</name>
</gene>
<evidence type="ECO:0000255" key="1">
    <source>
        <dbReference type="HAMAP-Rule" id="MF_04204"/>
    </source>
</evidence>
<accession>P15779</accession>
<feature type="chain" id="PRO_0000106086" description="Envelope small membrane protein">
    <location>
        <begin position="1"/>
        <end position="84"/>
    </location>
</feature>
<feature type="topological domain" description="Virion surface" evidence="1">
    <location>
        <begin position="1"/>
        <end position="18"/>
    </location>
</feature>
<feature type="transmembrane region" description="Helical" evidence="1">
    <location>
        <begin position="19"/>
        <end position="39"/>
    </location>
</feature>
<feature type="topological domain" description="Intravirion" evidence="1">
    <location>
        <begin position="40"/>
        <end position="80"/>
    </location>
</feature>
<name>VEMP_CVBM</name>
<organism>
    <name type="scientific">Bovine coronavirus (strain Mebus)</name>
    <name type="common">BCoV</name>
    <name type="synonym">BCV</name>
    <dbReference type="NCBI Taxonomy" id="11132"/>
    <lineage>
        <taxon>Viruses</taxon>
        <taxon>Riboviria</taxon>
        <taxon>Orthornavirae</taxon>
        <taxon>Pisuviricota</taxon>
        <taxon>Pisoniviricetes</taxon>
        <taxon>Nidovirales</taxon>
        <taxon>Cornidovirineae</taxon>
        <taxon>Coronaviridae</taxon>
        <taxon>Orthocoronavirinae</taxon>
        <taxon>Betacoronavirus</taxon>
        <taxon>Embecovirus</taxon>
        <taxon>Betacoronavirus 1</taxon>
    </lineage>
</organism>
<sequence length="84" mass="9542">MFMADAYFADTVWYVGQIIFIVAICLLVIIVVVAFLATFKLCIQLCGMCNTLGLSPSIYVFNRGRQFYEFYNDVKPPVLDVDDV</sequence>